<sequence>MHHFSNIKDVVAIDFIKAYAEHLKKSGKLEIPEWVDTVKTGMCKELAPLNPDWIYIRAAAIARKVYLNNGIGVMALRRAYGDQYNKHYNPSHRTLGSGKVNRYILQQLEKMGIVAKIQSGRSLTKEGRKDMDKIAFQVYKEHEAKVTPMILMPMN</sequence>
<keyword id="KW-0963">Cytoplasm</keyword>
<keyword id="KW-1185">Reference proteome</keyword>
<keyword id="KW-0687">Ribonucleoprotein</keyword>
<keyword id="KW-0689">Ribosomal protein</keyword>
<proteinExistence type="evidence at transcript level"/>
<accession>O15631</accession>
<accession>A0A175JIB0</accession>
<accession>C4LWS0</accession>
<organism evidence="4">
    <name type="scientific">Entamoeba histolytica (strain ATCC 30459 / HM-1:IMSS / ABRM)</name>
    <dbReference type="NCBI Taxonomy" id="294381"/>
    <lineage>
        <taxon>Eukaryota</taxon>
        <taxon>Amoebozoa</taxon>
        <taxon>Evosea</taxon>
        <taxon>Archamoebae</taxon>
        <taxon>Mastigamoebida</taxon>
        <taxon>Entamoebidae</taxon>
        <taxon>Entamoeba</taxon>
    </lineage>
</organism>
<reference evidence="3" key="1">
    <citation type="journal article" date="1997" name="Biochem. Biophys. Res. Commun.">
        <title>Analysis of expressed sequence tags (ESTs) of the parasitic protozoa Entamoeba histolytica.</title>
        <authorList>
            <person name="Tanaka T."/>
            <person name="Tanaka M."/>
            <person name="Mitsui Y."/>
        </authorList>
    </citation>
    <scope>NUCLEOTIDE SEQUENCE [MRNA]</scope>
    <source>
        <strain evidence="3">ATCC 30459 / HM-1:IMSS / ABRM</strain>
    </source>
</reference>
<reference evidence="4" key="2">
    <citation type="journal article" date="2005" name="Nature">
        <title>The genome of the protist parasite Entamoeba histolytica.</title>
        <authorList>
            <person name="Loftus B.J."/>
            <person name="Anderson I."/>
            <person name="Davies R."/>
            <person name="Alsmark U.C."/>
            <person name="Samuelson J."/>
            <person name="Amedeo P."/>
            <person name="Roncaglia P."/>
            <person name="Berriman M."/>
            <person name="Hirt R.P."/>
            <person name="Mann B.J."/>
            <person name="Nozaki T."/>
            <person name="Suh B."/>
            <person name="Pop M."/>
            <person name="Duchene M."/>
            <person name="Ackers J."/>
            <person name="Tannich E."/>
            <person name="Leippe M."/>
            <person name="Hofer M."/>
            <person name="Bruchhaus I."/>
            <person name="Willhoeft U."/>
            <person name="Bhattacharya A."/>
            <person name="Chillingworth T."/>
            <person name="Churcher C.M."/>
            <person name="Hance Z."/>
            <person name="Harris B."/>
            <person name="Harris D."/>
            <person name="Jagels K."/>
            <person name="Moule S."/>
            <person name="Mungall K.L."/>
            <person name="Ormond D."/>
            <person name="Squares R."/>
            <person name="Whitehead S."/>
            <person name="Quail M.A."/>
            <person name="Rabbinowitsch E."/>
            <person name="Norbertczak H."/>
            <person name="Price C."/>
            <person name="Wang Z."/>
            <person name="Guillen N."/>
            <person name="Gilchrist C."/>
            <person name="Stroup S.E."/>
            <person name="Bhattacharya S."/>
            <person name="Lohia A."/>
            <person name="Foster P.G."/>
            <person name="Sicheritz-Ponten T."/>
            <person name="Weber C."/>
            <person name="Singh U."/>
            <person name="Mukherjee C."/>
            <person name="El-Sayed N.M.A."/>
            <person name="Petri W.A."/>
            <person name="Clark C.G."/>
            <person name="Embley T.M."/>
            <person name="Barrell B.G."/>
            <person name="Fraser C.M."/>
            <person name="Hall N."/>
        </authorList>
    </citation>
    <scope>NUCLEOTIDE SEQUENCE [LARGE SCALE GENOMIC DNA]</scope>
    <source>
        <strain evidence="4">ATCC 30459 / HM-1:IMSS / ABRM</strain>
    </source>
</reference>
<gene>
    <name type="primary">RPS19</name>
    <name evidence="4" type="ORF">EHI_198740</name>
</gene>
<protein>
    <recommendedName>
        <fullName evidence="2">Small ribosomal subunit protein eS19</fullName>
    </recommendedName>
    <alternativeName>
        <fullName>40S ribosomal protein S19</fullName>
    </alternativeName>
</protein>
<evidence type="ECO:0000250" key="1">
    <source>
        <dbReference type="UniProtKB" id="P07280"/>
    </source>
</evidence>
<evidence type="ECO:0000305" key="2"/>
<evidence type="ECO:0000312" key="3">
    <source>
        <dbReference type="EMBL" id="BAA22027.1"/>
    </source>
</evidence>
<evidence type="ECO:0000312" key="4">
    <source>
        <dbReference type="EMBL" id="EAL49803.1"/>
    </source>
</evidence>
<comment type="function">
    <text evidence="1 2">Component of the small ribosomal subunit. The ribosome is a large ribonucleoprotein complex responsible for the synthesis of proteins in the cell (Probable). Required for proper maturation of the small (40S) ribosomal subunit (By similarity).</text>
</comment>
<comment type="subunit">
    <text evidence="1">Component of the small ribosomal subunit.</text>
</comment>
<comment type="subcellular location">
    <subcellularLocation>
        <location evidence="1">Cytoplasm</location>
    </subcellularLocation>
</comment>
<comment type="similarity">
    <text evidence="2">Belongs to the eukaryotic ribosomal protein eS19 family.</text>
</comment>
<comment type="sequence caution" evidence="2">
    <conflict type="frameshift">
        <sequence resource="EMBL-CDS" id="BAA22027"/>
    </conflict>
</comment>
<name>RS19_ENTH1</name>
<feature type="chain" id="PRO_0000153827" description="Small ribosomal subunit protein eS19">
    <location>
        <begin position="1"/>
        <end position="155"/>
    </location>
</feature>
<feature type="sequence conflict" description="In Ref. 1; BAA22027." evidence="2" ref="1">
    <original>N</original>
    <variation>Y</variation>
    <location>
        <position position="89"/>
    </location>
</feature>
<feature type="sequence conflict" description="In Ref. 1; BAA22027." evidence="2" ref="1">
    <original>A</original>
    <variation>G</variation>
    <location>
        <position position="115"/>
    </location>
</feature>
<dbReference type="EMBL" id="AB002796">
    <property type="protein sequence ID" value="BAA22027.1"/>
    <property type="status" value="ALT_FRAME"/>
    <property type="molecule type" value="mRNA"/>
</dbReference>
<dbReference type="EMBL" id="DS571165">
    <property type="protein sequence ID" value="EAL49803.1"/>
    <property type="molecule type" value="Genomic_DNA"/>
</dbReference>
<dbReference type="RefSeq" id="XP_655190.1">
    <property type="nucleotide sequence ID" value="XM_650098.2"/>
</dbReference>
<dbReference type="SMR" id="O15631"/>
<dbReference type="STRING" id="5759.C4LWS0"/>
<dbReference type="EnsemblProtists" id="GAT93162">
    <property type="protein sequence ID" value="GAT93162"/>
    <property type="gene ID" value="CL6EHI_198740"/>
</dbReference>
<dbReference type="EnsemblProtists" id="rna_EHI_198740-1">
    <property type="protein sequence ID" value="rna_EHI_198740-1"/>
    <property type="gene ID" value="EHI_198740"/>
</dbReference>
<dbReference type="GeneID" id="3409493"/>
<dbReference type="KEGG" id="ehi:EHI_198740"/>
<dbReference type="VEuPathDB" id="AmoebaDB:EHI5A_055620"/>
<dbReference type="VEuPathDB" id="AmoebaDB:EHI7A_065350"/>
<dbReference type="VEuPathDB" id="AmoebaDB:EHI8A_076740"/>
<dbReference type="VEuPathDB" id="AmoebaDB:EHI_198740"/>
<dbReference type="VEuPathDB" id="AmoebaDB:KM1_069800"/>
<dbReference type="eggNOG" id="KOG3411">
    <property type="taxonomic scope" value="Eukaryota"/>
</dbReference>
<dbReference type="HOGENOM" id="CLU_108559_0_1_1"/>
<dbReference type="OMA" id="YYTRTAS"/>
<dbReference type="OrthoDB" id="428974at2759"/>
<dbReference type="Proteomes" id="UP000001926">
    <property type="component" value="Partially assembled WGS sequence"/>
</dbReference>
<dbReference type="GO" id="GO:0022627">
    <property type="term" value="C:cytosolic small ribosomal subunit"/>
    <property type="evidence" value="ECO:0000318"/>
    <property type="project" value="GO_Central"/>
</dbReference>
<dbReference type="GO" id="GO:0003723">
    <property type="term" value="F:RNA binding"/>
    <property type="evidence" value="ECO:0000318"/>
    <property type="project" value="GO_Central"/>
</dbReference>
<dbReference type="GO" id="GO:0003735">
    <property type="term" value="F:structural constituent of ribosome"/>
    <property type="evidence" value="ECO:0000318"/>
    <property type="project" value="GO_Central"/>
</dbReference>
<dbReference type="GO" id="GO:0000028">
    <property type="term" value="P:ribosomal small subunit assembly"/>
    <property type="evidence" value="ECO:0000318"/>
    <property type="project" value="GO_Central"/>
</dbReference>
<dbReference type="GO" id="GO:0006412">
    <property type="term" value="P:translation"/>
    <property type="evidence" value="ECO:0007669"/>
    <property type="project" value="InterPro"/>
</dbReference>
<dbReference type="FunFam" id="1.10.10.10:FF:000449">
    <property type="entry name" value="30S ribosomal protein S19e"/>
    <property type="match status" value="1"/>
</dbReference>
<dbReference type="Gene3D" id="1.10.10.10">
    <property type="entry name" value="Winged helix-like DNA-binding domain superfamily/Winged helix DNA-binding domain"/>
    <property type="match status" value="1"/>
</dbReference>
<dbReference type="InterPro" id="IPR001266">
    <property type="entry name" value="Ribosomal_eS19"/>
</dbReference>
<dbReference type="InterPro" id="IPR018277">
    <property type="entry name" value="Ribosomal_eS19_CS"/>
</dbReference>
<dbReference type="InterPro" id="IPR036388">
    <property type="entry name" value="WH-like_DNA-bd_sf"/>
</dbReference>
<dbReference type="InterPro" id="IPR036390">
    <property type="entry name" value="WH_DNA-bd_sf"/>
</dbReference>
<dbReference type="PANTHER" id="PTHR11710">
    <property type="entry name" value="40S RIBOSOMAL PROTEIN S19"/>
    <property type="match status" value="1"/>
</dbReference>
<dbReference type="PANTHER" id="PTHR11710:SF0">
    <property type="entry name" value="40S RIBOSOMAL PROTEIN S19"/>
    <property type="match status" value="1"/>
</dbReference>
<dbReference type="Pfam" id="PF01090">
    <property type="entry name" value="Ribosomal_S19e"/>
    <property type="match status" value="1"/>
</dbReference>
<dbReference type="SMART" id="SM01413">
    <property type="entry name" value="Ribosomal_S19e"/>
    <property type="match status" value="1"/>
</dbReference>
<dbReference type="SUPFAM" id="SSF46785">
    <property type="entry name" value="Winged helix' DNA-binding domain"/>
    <property type="match status" value="1"/>
</dbReference>
<dbReference type="PROSITE" id="PS00628">
    <property type="entry name" value="RIBOSOMAL_S19E"/>
    <property type="match status" value="1"/>
</dbReference>